<comment type="function">
    <text evidence="2">Component of the DNA-directed RNA polymerase (RNAP) that catalyzes the transcription in the cytoplasm of viral DNA into RNA using the four ribonucleoside triphosphates as substrates.</text>
</comment>
<comment type="subunit">
    <text evidence="3">Part of the viral DNA-directed RNA polymerase that consists of 8 polII-like subunits (RPB1, RPB2, RPB3, RPB5, RPB6, RPB7, RPB9, RPB10), a capping enzyme and a termination factor.</text>
</comment>
<comment type="subcellular location">
    <subcellularLocation>
        <location evidence="5">Host cytoplasm</location>
    </subcellularLocation>
</comment>
<comment type="induction">
    <text evidence="3">Expressed in the early phase of the viral replicative cycle.</text>
</comment>
<comment type="similarity">
    <text evidence="5">Belongs to the Asfivirus DNA-directed RNA polymerase RPB9 homolog family.</text>
</comment>
<reference key="1">
    <citation type="submission" date="2003-03" db="EMBL/GenBank/DDBJ databases">
        <title>African swine fever virus genomes.</title>
        <authorList>
            <person name="Kutish G.F."/>
            <person name="Rock D.L."/>
        </authorList>
    </citation>
    <scope>NUCLEOTIDE SEQUENCE [LARGE SCALE GENOMIC DNA]</scope>
</reference>
<dbReference type="EMBL" id="AY261361">
    <property type="status" value="NOT_ANNOTATED_CDS"/>
    <property type="molecule type" value="Genomic_DNA"/>
</dbReference>
<dbReference type="SMR" id="P0CA23"/>
<dbReference type="Proteomes" id="UP000000860">
    <property type="component" value="Segment"/>
</dbReference>
<dbReference type="GO" id="GO:0000428">
    <property type="term" value="C:DNA-directed RNA polymerase complex"/>
    <property type="evidence" value="ECO:0007669"/>
    <property type="project" value="UniProtKB-KW"/>
</dbReference>
<dbReference type="GO" id="GO:0030430">
    <property type="term" value="C:host cell cytoplasm"/>
    <property type="evidence" value="ECO:0007669"/>
    <property type="project" value="UniProtKB-SubCell"/>
</dbReference>
<dbReference type="GO" id="GO:0008270">
    <property type="term" value="F:zinc ion binding"/>
    <property type="evidence" value="ECO:0007669"/>
    <property type="project" value="UniProtKB-KW"/>
</dbReference>
<dbReference type="GO" id="GO:0019083">
    <property type="term" value="P:viral transcription"/>
    <property type="evidence" value="ECO:0007669"/>
    <property type="project" value="UniProtKB-KW"/>
</dbReference>
<feature type="chain" id="PRO_0000373487" description="DNA-directed RNA polymerase RPB9 homolog">
    <location>
        <begin position="1"/>
        <end position="105"/>
    </location>
</feature>
<feature type="zinc finger region" description="C4-type; atypical" evidence="4">
    <location>
        <begin position="4"/>
        <end position="26"/>
    </location>
</feature>
<feature type="binding site" evidence="1">
    <location>
        <position position="4"/>
    </location>
    <ligand>
        <name>Zn(2+)</name>
        <dbReference type="ChEBI" id="CHEBI:29105"/>
        <label>1</label>
    </ligand>
</feature>
<feature type="binding site" evidence="1">
    <location>
        <position position="7"/>
    </location>
    <ligand>
        <name>Zn(2+)</name>
        <dbReference type="ChEBI" id="CHEBI:29105"/>
        <label>1</label>
    </ligand>
</feature>
<feature type="binding site" evidence="1">
    <location>
        <position position="24"/>
    </location>
    <ligand>
        <name>Zn(2+)</name>
        <dbReference type="ChEBI" id="CHEBI:29105"/>
        <label>1</label>
    </ligand>
</feature>
<feature type="binding site" evidence="1">
    <location>
        <position position="26"/>
    </location>
    <ligand>
        <name>Zn(2+)</name>
        <dbReference type="ChEBI" id="CHEBI:29105"/>
        <label>1</label>
    </ligand>
</feature>
<feature type="binding site" evidence="1">
    <location>
        <position position="73"/>
    </location>
    <ligand>
        <name>Zn(2+)</name>
        <dbReference type="ChEBI" id="CHEBI:29105"/>
        <label>2</label>
    </ligand>
</feature>
<feature type="binding site" evidence="1">
    <location>
        <position position="76"/>
    </location>
    <ligand>
        <name>Zn(2+)</name>
        <dbReference type="ChEBI" id="CHEBI:29105"/>
        <label>2</label>
    </ligand>
</feature>
<feature type="binding site" evidence="1">
    <location>
        <position position="96"/>
    </location>
    <ligand>
        <name>Zn(2+)</name>
        <dbReference type="ChEBI" id="CHEBI:29105"/>
        <label>2</label>
    </ligand>
</feature>
<proteinExistence type="inferred from homology"/>
<protein>
    <recommendedName>
        <fullName evidence="3">DNA-directed RNA polymerase RPB9 homolog</fullName>
        <shortName evidence="5">RPB9 homolog</shortName>
    </recommendedName>
</protein>
<organism>
    <name type="scientific">African swine fever virus (isolate Tick/Malawi/Lil 20-1/1983)</name>
    <name type="common">ASFV</name>
    <dbReference type="NCBI Taxonomy" id="10500"/>
    <lineage>
        <taxon>Viruses</taxon>
        <taxon>Varidnaviria</taxon>
        <taxon>Bamfordvirae</taxon>
        <taxon>Nucleocytoviricota</taxon>
        <taxon>Pokkesviricetes</taxon>
        <taxon>Asfuvirales</taxon>
        <taxon>Asfarviridae</taxon>
        <taxon>Asfivirus</taxon>
        <taxon>African swine fever virus</taxon>
    </lineage>
</organism>
<evidence type="ECO:0000250" key="1">
    <source>
        <dbReference type="UniProtKB" id="P27999"/>
    </source>
</evidence>
<evidence type="ECO:0000250" key="2">
    <source>
        <dbReference type="UniProtKB" id="P36954"/>
    </source>
</evidence>
<evidence type="ECO:0000250" key="3">
    <source>
        <dbReference type="UniProtKB" id="Q65157"/>
    </source>
</evidence>
<evidence type="ECO:0000255" key="4"/>
<evidence type="ECO:0000305" key="5"/>
<accession>P0CA23</accession>
<organismHost>
    <name type="scientific">Ornithodoros</name>
    <name type="common">relapsing fever ticks</name>
    <dbReference type="NCBI Taxonomy" id="6937"/>
</organismHost>
<organismHost>
    <name type="scientific">Phacochoerus aethiopicus</name>
    <name type="common">Warthog</name>
    <dbReference type="NCBI Taxonomy" id="85517"/>
</organismHost>
<organismHost>
    <name type="scientific">Phacochoerus africanus</name>
    <name type="common">Warthog</name>
    <dbReference type="NCBI Taxonomy" id="41426"/>
</organismHost>
<organismHost>
    <name type="scientific">Potamochoerus larvatus</name>
    <name type="common">Bushpig</name>
    <dbReference type="NCBI Taxonomy" id="273792"/>
</organismHost>
<organismHost>
    <name type="scientific">Sus scrofa</name>
    <name type="common">Pig</name>
    <dbReference type="NCBI Taxonomy" id="9823"/>
</organismHost>
<sequence length="105" mass="11787">MKICKACSSCMVRTYVDGNIIFRCSCGESVQGDSQNLLVSSKVYHTGEMEDKYKIFIKNAPFDPTNCQIKKDCPNCHLDYLTQICIGSQKIIILVCRCGYTSNRG</sequence>
<keyword id="KW-0240">DNA-directed RNA polymerase</keyword>
<keyword id="KW-0244">Early protein</keyword>
<keyword id="KW-1035">Host cytoplasm</keyword>
<keyword id="KW-0479">Metal-binding</keyword>
<keyword id="KW-0804">Transcription</keyword>
<keyword id="KW-1195">Viral transcription</keyword>
<keyword id="KW-0862">Zinc</keyword>
<keyword id="KW-0863">Zinc-finger</keyword>
<name>RPB9_ASFM2</name>
<gene>
    <name type="ordered locus">Mal-073</name>
</gene>